<keyword id="KW-0175">Coiled coil</keyword>
<keyword id="KW-0256">Endoplasmic reticulum</keyword>
<keyword id="KW-0472">Membrane</keyword>
<keyword id="KW-1185">Reference proteome</keyword>
<keyword id="KW-0732">Signal</keyword>
<keyword id="KW-0812">Transmembrane</keyword>
<keyword id="KW-1133">Transmembrane helix</keyword>
<feature type="signal peptide" evidence="4">
    <location>
        <begin position="1"/>
        <end position="23"/>
    </location>
</feature>
<feature type="chain" id="PRO_0000235802" description="PAT complex subunit CCDC47">
    <location>
        <begin position="24"/>
        <end position="486"/>
    </location>
</feature>
<feature type="topological domain" description="Cytoplasmic" evidence="1">
    <location>
        <begin position="24"/>
        <end position="138"/>
    </location>
</feature>
<feature type="transmembrane region" description="Helical" evidence="4">
    <location>
        <begin position="139"/>
        <end position="159"/>
    </location>
</feature>
<feature type="topological domain" description="Lumenal" evidence="1">
    <location>
        <begin position="160"/>
        <end position="486"/>
    </location>
</feature>
<feature type="region of interest" description="Disordered" evidence="5">
    <location>
        <begin position="47"/>
        <end position="99"/>
    </location>
</feature>
<feature type="region of interest" description="Disordered" evidence="5">
    <location>
        <begin position="422"/>
        <end position="486"/>
    </location>
</feature>
<feature type="coiled-coil region" evidence="4">
    <location>
        <begin position="421"/>
        <end position="486"/>
    </location>
</feature>
<feature type="compositionally biased region" description="Acidic residues" evidence="5">
    <location>
        <begin position="72"/>
        <end position="97"/>
    </location>
</feature>
<feature type="compositionally biased region" description="Basic and acidic residues" evidence="5">
    <location>
        <begin position="433"/>
        <end position="475"/>
    </location>
</feature>
<feature type="compositionally biased region" description="Basic residues" evidence="5">
    <location>
        <begin position="476"/>
        <end position="486"/>
    </location>
</feature>
<accession>Q66I12</accession>
<protein>
    <recommendedName>
        <fullName evidence="6">PAT complex subunit CCDC47</fullName>
    </recommendedName>
    <alternativeName>
        <fullName>Coiled-coil domain-containing protein 47</fullName>
    </alternativeName>
</protein>
<proteinExistence type="evidence at transcript level"/>
<dbReference type="EMBL" id="BC081592">
    <property type="protein sequence ID" value="AAH81592.1"/>
    <property type="molecule type" value="mRNA"/>
</dbReference>
<dbReference type="RefSeq" id="NP_001004551.1">
    <property type="nucleotide sequence ID" value="NM_001004551.1"/>
</dbReference>
<dbReference type="SMR" id="Q66I12"/>
<dbReference type="BioGRID" id="92620">
    <property type="interactions" value="1"/>
</dbReference>
<dbReference type="FunCoup" id="Q66I12">
    <property type="interactions" value="2361"/>
</dbReference>
<dbReference type="STRING" id="7955.ENSDARP00000051541"/>
<dbReference type="PaxDb" id="7955-ENSDARP00000051541"/>
<dbReference type="GeneID" id="447812"/>
<dbReference type="KEGG" id="dre:447812"/>
<dbReference type="AGR" id="ZFIN:ZDB-GENE-040912-15"/>
<dbReference type="CTD" id="57003"/>
<dbReference type="ZFIN" id="ZDB-GENE-040912-15">
    <property type="gene designation" value="ccdc47"/>
</dbReference>
<dbReference type="eggNOG" id="KOG2357">
    <property type="taxonomic scope" value="Eukaryota"/>
</dbReference>
<dbReference type="InParanoid" id="Q66I12"/>
<dbReference type="OrthoDB" id="10039147at2759"/>
<dbReference type="PhylomeDB" id="Q66I12"/>
<dbReference type="PRO" id="PR:Q66I12"/>
<dbReference type="Proteomes" id="UP000000437">
    <property type="component" value="Chromosome 3"/>
</dbReference>
<dbReference type="GO" id="GO:0005783">
    <property type="term" value="C:endoplasmic reticulum"/>
    <property type="evidence" value="ECO:0000318"/>
    <property type="project" value="GO_Central"/>
</dbReference>
<dbReference type="GO" id="GO:0005789">
    <property type="term" value="C:endoplasmic reticulum membrane"/>
    <property type="evidence" value="ECO:0000250"/>
    <property type="project" value="UniProtKB"/>
</dbReference>
<dbReference type="GO" id="GO:0160064">
    <property type="term" value="C:multi-pass translocon complex"/>
    <property type="evidence" value="ECO:0000250"/>
    <property type="project" value="UniProtKB"/>
</dbReference>
<dbReference type="GO" id="GO:0030867">
    <property type="term" value="C:rough endoplasmic reticulum membrane"/>
    <property type="evidence" value="ECO:0007669"/>
    <property type="project" value="UniProtKB-SubCell"/>
</dbReference>
<dbReference type="GO" id="GO:0005509">
    <property type="term" value="F:calcium ion binding"/>
    <property type="evidence" value="ECO:0000318"/>
    <property type="project" value="GO_Central"/>
</dbReference>
<dbReference type="GO" id="GO:0044183">
    <property type="term" value="F:protein folding chaperone"/>
    <property type="evidence" value="ECO:0000250"/>
    <property type="project" value="UniProtKB"/>
</dbReference>
<dbReference type="GO" id="GO:0043022">
    <property type="term" value="F:ribosome binding"/>
    <property type="evidence" value="ECO:0000250"/>
    <property type="project" value="UniProtKB"/>
</dbReference>
<dbReference type="GO" id="GO:0032469">
    <property type="term" value="P:endoplasmic reticulum calcium ion homeostasis"/>
    <property type="evidence" value="ECO:0007669"/>
    <property type="project" value="InterPro"/>
</dbReference>
<dbReference type="GO" id="GO:0160063">
    <property type="term" value="P:multi-pass transmembrane protein insertion into ER membrane"/>
    <property type="evidence" value="ECO:0000250"/>
    <property type="project" value="UniProtKB"/>
</dbReference>
<dbReference type="GO" id="GO:0045048">
    <property type="term" value="P:protein insertion into ER membrane"/>
    <property type="evidence" value="ECO:0000250"/>
    <property type="project" value="UniProtKB"/>
</dbReference>
<dbReference type="InterPro" id="IPR012879">
    <property type="entry name" value="CCDC47"/>
</dbReference>
<dbReference type="PANTHER" id="PTHR12883">
    <property type="entry name" value="ADIPOCYTE-SPECIFIC PROTEIN 4-RELATED"/>
    <property type="match status" value="1"/>
</dbReference>
<dbReference type="PANTHER" id="PTHR12883:SF0">
    <property type="entry name" value="PAT COMPLEX SUBUNIT CCDC47"/>
    <property type="match status" value="1"/>
</dbReference>
<dbReference type="Pfam" id="PF07946">
    <property type="entry name" value="CCDC47"/>
    <property type="match status" value="1"/>
</dbReference>
<sequence>MRHLVFLLLPALLLLLALPDTRGRYNDDFDDGEDIAEFDDNDFAEFEDVSEDPAVDVEKEPPPRPAPSSTPVEDDEDEATVENEDGQDEFEDTDAQDQDMYNKYDTDEFEGYEKSNPSFKDTLIYREVPAHLQNSWESYYMEILMVTGLLAYIMNYIIGKNKNSRLAQAWFNSHRELLESNFALVGDDGTSKEATSTGKLNQENEHIYNLWCSGRVCCEGMLIQLKFLKRQDLLNVLARMMRPTCDQVQVRVTLNDEDMDTFVFAVGSRKAMARMQKEMQDLSEFCGDKPKSGAKYGIPDSLTILSEMGEVTDGVMDNKMVHYLTSHADKIESIHFSDQFSGPKVMQEEGQPLKLPETKKTLLFTFNVPGMGNTSPKDMDSLLPLMNMVIYSIDKVKKLRLNREGKQKADRNRARVEENFLKQTHAQRQEAAQTRREEKKRAEKERIMNEEDPERQRRLEEAAQRREQKKMEKKQMKMKQIKVKAM</sequence>
<reference key="1">
    <citation type="submission" date="2004-09" db="EMBL/GenBank/DDBJ databases">
        <authorList>
            <consortium name="NIH - Zebrafish Gene Collection (ZGC) project"/>
        </authorList>
    </citation>
    <scope>NUCLEOTIDE SEQUENCE [LARGE SCALE MRNA]</scope>
</reference>
<comment type="function">
    <text evidence="2">Component of the multi-pass translocon (MPT) complex that mediates insertion of multi-pass membrane proteins into the lipid bilayer of membranes. The MPT complex takes over after the SEC61 complex: following membrane insertion of the first few transmembrane segments of proteins by the SEC61 complex, the MPT complex occludes the lateral gate of the SEC61 complex to promote insertion of subsequent transmembrane regions.</text>
</comment>
<comment type="subunit">
    <text evidence="2">Component of the multi-pass translocon (MPT) complex.</text>
</comment>
<comment type="subcellular location">
    <subcellularLocation>
        <location evidence="2">Endoplasmic reticulum membrane</location>
        <topology evidence="4">Single-pass type I membrane protein</topology>
    </subcellularLocation>
    <subcellularLocation>
        <location evidence="3">Rough endoplasmic reticulum membrane</location>
        <topology evidence="4">Single-pass type I membrane protein</topology>
    </subcellularLocation>
</comment>
<comment type="similarity">
    <text evidence="6">Belongs to the CCDC47 family.</text>
</comment>
<evidence type="ECO:0000250" key="1">
    <source>
        <dbReference type="UniProtKB" id="A0A8I3P7X4"/>
    </source>
</evidence>
<evidence type="ECO:0000250" key="2">
    <source>
        <dbReference type="UniProtKB" id="Q96A33"/>
    </source>
</evidence>
<evidence type="ECO:0000250" key="3">
    <source>
        <dbReference type="UniProtKB" id="Q9D024"/>
    </source>
</evidence>
<evidence type="ECO:0000255" key="4"/>
<evidence type="ECO:0000256" key="5">
    <source>
        <dbReference type="SAM" id="MobiDB-lite"/>
    </source>
</evidence>
<evidence type="ECO:0000305" key="6"/>
<gene>
    <name type="primary">ccdc47</name>
    <name type="ORF">zgc:92099</name>
</gene>
<name>CCD47_DANRE</name>
<organism>
    <name type="scientific">Danio rerio</name>
    <name type="common">Zebrafish</name>
    <name type="synonym">Brachydanio rerio</name>
    <dbReference type="NCBI Taxonomy" id="7955"/>
    <lineage>
        <taxon>Eukaryota</taxon>
        <taxon>Metazoa</taxon>
        <taxon>Chordata</taxon>
        <taxon>Craniata</taxon>
        <taxon>Vertebrata</taxon>
        <taxon>Euteleostomi</taxon>
        <taxon>Actinopterygii</taxon>
        <taxon>Neopterygii</taxon>
        <taxon>Teleostei</taxon>
        <taxon>Ostariophysi</taxon>
        <taxon>Cypriniformes</taxon>
        <taxon>Danionidae</taxon>
        <taxon>Danioninae</taxon>
        <taxon>Danio</taxon>
    </lineage>
</organism>